<sequence length="476" mass="52220">MTSTEEKTTSGRVVRITGPVVDVEFPRGSVPELFNALHADITYKELSKTLTLEVAQHLGDNLVRTISMQPTDGLVRGVEVTDTGNSISVPVGDGVKGHVFNALGDCLDEPGYGKDFEHWSIHRKPPPFSELEPRTEMLETGLKVVDLLTPYVRGGKIALFGGAGVGKTVLIQEMINRIARNFGGTSVFAGVGERTREGNDLWVELEDANVLKDTALVFGQMDEPPGTRMRVALSALTMAEFFRDEQQQDVLLFIDNIFRFTQAGSEVSTLLGRMPSAVGYQPTLADEMGELQERITSTRGRSITSMQAVYVPADDYTDPAPATTFAHLDATTELSRTVFSKGIFPAVDPLASSSTILDPAVVGDEHYRVAQEVIRILQRYKDLQDIIAILGIDELAEEDKQLVQRARRLERFLSQNMMAAEQFTGQPGSTVPLKETIEAFDKLTKGEFDHLPEQAFFLIGGLDDLAKKAESLGAKL</sequence>
<feature type="chain" id="PRO_0000339547" description="ATP synthase subunit beta">
    <location>
        <begin position="1"/>
        <end position="476"/>
    </location>
</feature>
<feature type="binding site" evidence="1">
    <location>
        <begin position="161"/>
        <end position="168"/>
    </location>
    <ligand>
        <name>ATP</name>
        <dbReference type="ChEBI" id="CHEBI:30616"/>
    </ligand>
</feature>
<gene>
    <name evidence="1" type="primary">atpD</name>
    <name type="ordered locus">Mflv_2318</name>
</gene>
<proteinExistence type="inferred from homology"/>
<keyword id="KW-0066">ATP synthesis</keyword>
<keyword id="KW-0067">ATP-binding</keyword>
<keyword id="KW-1003">Cell membrane</keyword>
<keyword id="KW-0139">CF(1)</keyword>
<keyword id="KW-0375">Hydrogen ion transport</keyword>
<keyword id="KW-0406">Ion transport</keyword>
<keyword id="KW-0472">Membrane</keyword>
<keyword id="KW-0547">Nucleotide-binding</keyword>
<keyword id="KW-1278">Translocase</keyword>
<keyword id="KW-0813">Transport</keyword>
<comment type="function">
    <text evidence="1">Produces ATP from ADP in the presence of a proton gradient across the membrane. The catalytic sites are hosted primarily by the beta subunits.</text>
</comment>
<comment type="catalytic activity">
    <reaction evidence="1">
        <text>ATP + H2O + 4 H(+)(in) = ADP + phosphate + 5 H(+)(out)</text>
        <dbReference type="Rhea" id="RHEA:57720"/>
        <dbReference type="ChEBI" id="CHEBI:15377"/>
        <dbReference type="ChEBI" id="CHEBI:15378"/>
        <dbReference type="ChEBI" id="CHEBI:30616"/>
        <dbReference type="ChEBI" id="CHEBI:43474"/>
        <dbReference type="ChEBI" id="CHEBI:456216"/>
        <dbReference type="EC" id="7.1.2.2"/>
    </reaction>
</comment>
<comment type="subunit">
    <text evidence="1">F-type ATPases have 2 components, CF(1) - the catalytic core - and CF(0) - the membrane proton channel. CF(1) has five subunits: alpha(3), beta(3), gamma(1), delta(1), epsilon(1). CF(0) has three main subunits: a(1), b(2) and c(9-12). The alpha and beta chains form an alternating ring which encloses part of the gamma chain. CF(1) is attached to CF(0) by a central stalk formed by the gamma and epsilon chains, while a peripheral stalk is formed by the delta and b chains.</text>
</comment>
<comment type="subcellular location">
    <subcellularLocation>
        <location evidence="1">Cell membrane</location>
        <topology evidence="1">Peripheral membrane protein</topology>
    </subcellularLocation>
</comment>
<comment type="similarity">
    <text evidence="1">Belongs to the ATPase alpha/beta chains family.</text>
</comment>
<name>ATPB_MYCGI</name>
<reference key="1">
    <citation type="submission" date="2007-04" db="EMBL/GenBank/DDBJ databases">
        <title>Complete sequence of chromosome of Mycobacterium gilvum PYR-GCK.</title>
        <authorList>
            <consortium name="US DOE Joint Genome Institute"/>
            <person name="Copeland A."/>
            <person name="Lucas S."/>
            <person name="Lapidus A."/>
            <person name="Barry K."/>
            <person name="Detter J.C."/>
            <person name="Glavina del Rio T."/>
            <person name="Hammon N."/>
            <person name="Israni S."/>
            <person name="Dalin E."/>
            <person name="Tice H."/>
            <person name="Pitluck S."/>
            <person name="Chain P."/>
            <person name="Malfatti S."/>
            <person name="Shin M."/>
            <person name="Vergez L."/>
            <person name="Schmutz J."/>
            <person name="Larimer F."/>
            <person name="Land M."/>
            <person name="Hauser L."/>
            <person name="Kyrpides N."/>
            <person name="Mikhailova N."/>
            <person name="Miller C."/>
            <person name="Richardson P."/>
        </authorList>
    </citation>
    <scope>NUCLEOTIDE SEQUENCE [LARGE SCALE GENOMIC DNA]</scope>
    <source>
        <strain>PYR-GCK</strain>
    </source>
</reference>
<accession>A4T8K2</accession>
<protein>
    <recommendedName>
        <fullName evidence="1">ATP synthase subunit beta</fullName>
        <ecNumber evidence="1">7.1.2.2</ecNumber>
    </recommendedName>
    <alternativeName>
        <fullName evidence="1">ATP synthase F1 sector subunit beta</fullName>
    </alternativeName>
    <alternativeName>
        <fullName evidence="1">F-ATPase subunit beta</fullName>
    </alternativeName>
</protein>
<organism>
    <name type="scientific">Mycolicibacterium gilvum (strain PYR-GCK)</name>
    <name type="common">Mycobacterium gilvum (strain PYR-GCK)</name>
    <dbReference type="NCBI Taxonomy" id="350054"/>
    <lineage>
        <taxon>Bacteria</taxon>
        <taxon>Bacillati</taxon>
        <taxon>Actinomycetota</taxon>
        <taxon>Actinomycetes</taxon>
        <taxon>Mycobacteriales</taxon>
        <taxon>Mycobacteriaceae</taxon>
        <taxon>Mycolicibacterium</taxon>
    </lineage>
</organism>
<dbReference type="EC" id="7.1.2.2" evidence="1"/>
<dbReference type="EMBL" id="CP000656">
    <property type="protein sequence ID" value="ABP44796.1"/>
    <property type="molecule type" value="Genomic_DNA"/>
</dbReference>
<dbReference type="SMR" id="A4T8K2"/>
<dbReference type="STRING" id="350054.Mflv_2318"/>
<dbReference type="KEGG" id="mgi:Mflv_2318"/>
<dbReference type="eggNOG" id="COG0055">
    <property type="taxonomic scope" value="Bacteria"/>
</dbReference>
<dbReference type="HOGENOM" id="CLU_022398_0_2_11"/>
<dbReference type="OrthoDB" id="9801639at2"/>
<dbReference type="GO" id="GO:0005886">
    <property type="term" value="C:plasma membrane"/>
    <property type="evidence" value="ECO:0007669"/>
    <property type="project" value="UniProtKB-SubCell"/>
</dbReference>
<dbReference type="GO" id="GO:0045259">
    <property type="term" value="C:proton-transporting ATP synthase complex"/>
    <property type="evidence" value="ECO:0007669"/>
    <property type="project" value="UniProtKB-KW"/>
</dbReference>
<dbReference type="GO" id="GO:0005524">
    <property type="term" value="F:ATP binding"/>
    <property type="evidence" value="ECO:0007669"/>
    <property type="project" value="UniProtKB-UniRule"/>
</dbReference>
<dbReference type="GO" id="GO:0016887">
    <property type="term" value="F:ATP hydrolysis activity"/>
    <property type="evidence" value="ECO:0007669"/>
    <property type="project" value="InterPro"/>
</dbReference>
<dbReference type="GO" id="GO:0046933">
    <property type="term" value="F:proton-transporting ATP synthase activity, rotational mechanism"/>
    <property type="evidence" value="ECO:0007669"/>
    <property type="project" value="UniProtKB-UniRule"/>
</dbReference>
<dbReference type="CDD" id="cd18110">
    <property type="entry name" value="ATP-synt_F1_beta_C"/>
    <property type="match status" value="1"/>
</dbReference>
<dbReference type="CDD" id="cd18115">
    <property type="entry name" value="ATP-synt_F1_beta_N"/>
    <property type="match status" value="1"/>
</dbReference>
<dbReference type="CDD" id="cd01133">
    <property type="entry name" value="F1-ATPase_beta_CD"/>
    <property type="match status" value="1"/>
</dbReference>
<dbReference type="FunFam" id="1.10.1140.10:FF:000001">
    <property type="entry name" value="ATP synthase subunit beta"/>
    <property type="match status" value="1"/>
</dbReference>
<dbReference type="FunFam" id="2.40.10.170:FF:000005">
    <property type="entry name" value="ATP synthase subunit beta"/>
    <property type="match status" value="1"/>
</dbReference>
<dbReference type="FunFam" id="3.40.50.300:FF:000004">
    <property type="entry name" value="ATP synthase subunit beta"/>
    <property type="match status" value="1"/>
</dbReference>
<dbReference type="Gene3D" id="2.40.10.170">
    <property type="match status" value="1"/>
</dbReference>
<dbReference type="Gene3D" id="1.10.1140.10">
    <property type="entry name" value="Bovine Mitochondrial F1-atpase, Atp Synthase Beta Chain, Chain D, domain 3"/>
    <property type="match status" value="1"/>
</dbReference>
<dbReference type="Gene3D" id="3.40.50.300">
    <property type="entry name" value="P-loop containing nucleotide triphosphate hydrolases"/>
    <property type="match status" value="1"/>
</dbReference>
<dbReference type="HAMAP" id="MF_01347">
    <property type="entry name" value="ATP_synth_beta_bact"/>
    <property type="match status" value="1"/>
</dbReference>
<dbReference type="InterPro" id="IPR003593">
    <property type="entry name" value="AAA+_ATPase"/>
</dbReference>
<dbReference type="InterPro" id="IPR055190">
    <property type="entry name" value="ATP-synt_VA_C"/>
</dbReference>
<dbReference type="InterPro" id="IPR005722">
    <property type="entry name" value="ATP_synth_F1_bsu"/>
</dbReference>
<dbReference type="InterPro" id="IPR020003">
    <property type="entry name" value="ATPase_a/bsu_AS"/>
</dbReference>
<dbReference type="InterPro" id="IPR050053">
    <property type="entry name" value="ATPase_alpha/beta_chains"/>
</dbReference>
<dbReference type="InterPro" id="IPR004100">
    <property type="entry name" value="ATPase_F1/V1/A1_a/bsu_N"/>
</dbReference>
<dbReference type="InterPro" id="IPR036121">
    <property type="entry name" value="ATPase_F1/V1/A1_a/bsu_N_sf"/>
</dbReference>
<dbReference type="InterPro" id="IPR000194">
    <property type="entry name" value="ATPase_F1/V1/A1_a/bsu_nucl-bd"/>
</dbReference>
<dbReference type="InterPro" id="IPR024034">
    <property type="entry name" value="ATPase_F1/V1_b/a_C"/>
</dbReference>
<dbReference type="InterPro" id="IPR027417">
    <property type="entry name" value="P-loop_NTPase"/>
</dbReference>
<dbReference type="NCBIfam" id="TIGR01039">
    <property type="entry name" value="atpD"/>
    <property type="match status" value="1"/>
</dbReference>
<dbReference type="PANTHER" id="PTHR15184">
    <property type="entry name" value="ATP SYNTHASE"/>
    <property type="match status" value="1"/>
</dbReference>
<dbReference type="PANTHER" id="PTHR15184:SF71">
    <property type="entry name" value="ATP SYNTHASE SUBUNIT BETA, MITOCHONDRIAL"/>
    <property type="match status" value="1"/>
</dbReference>
<dbReference type="Pfam" id="PF00006">
    <property type="entry name" value="ATP-synt_ab"/>
    <property type="match status" value="1"/>
</dbReference>
<dbReference type="Pfam" id="PF02874">
    <property type="entry name" value="ATP-synt_ab_N"/>
    <property type="match status" value="1"/>
</dbReference>
<dbReference type="Pfam" id="PF22919">
    <property type="entry name" value="ATP-synt_VA_C"/>
    <property type="match status" value="1"/>
</dbReference>
<dbReference type="SMART" id="SM00382">
    <property type="entry name" value="AAA"/>
    <property type="match status" value="1"/>
</dbReference>
<dbReference type="SUPFAM" id="SSF47917">
    <property type="entry name" value="C-terminal domain of alpha and beta subunits of F1 ATP synthase"/>
    <property type="match status" value="1"/>
</dbReference>
<dbReference type="SUPFAM" id="SSF50615">
    <property type="entry name" value="N-terminal domain of alpha and beta subunits of F1 ATP synthase"/>
    <property type="match status" value="1"/>
</dbReference>
<dbReference type="SUPFAM" id="SSF52540">
    <property type="entry name" value="P-loop containing nucleoside triphosphate hydrolases"/>
    <property type="match status" value="1"/>
</dbReference>
<dbReference type="PROSITE" id="PS00152">
    <property type="entry name" value="ATPASE_ALPHA_BETA"/>
    <property type="match status" value="1"/>
</dbReference>
<evidence type="ECO:0000255" key="1">
    <source>
        <dbReference type="HAMAP-Rule" id="MF_01347"/>
    </source>
</evidence>